<keyword id="KW-0963">Cytoplasm</keyword>
<keyword id="KW-0333">Golgi apparatus</keyword>
<keyword id="KW-0343">GTPase activation</keyword>
<keyword id="KW-0479">Metal-binding</keyword>
<keyword id="KW-1185">Reference proteome</keyword>
<keyword id="KW-0862">Zinc</keyword>
<keyword id="KW-0863">Zinc-finger</keyword>
<protein>
    <recommendedName>
        <fullName>Uncharacterized protein C824.09c</fullName>
    </recommendedName>
</protein>
<organism>
    <name type="scientific">Schizosaccharomyces pombe (strain 972 / ATCC 24843)</name>
    <name type="common">Fission yeast</name>
    <dbReference type="NCBI Taxonomy" id="284812"/>
    <lineage>
        <taxon>Eukaryota</taxon>
        <taxon>Fungi</taxon>
        <taxon>Dikarya</taxon>
        <taxon>Ascomycota</taxon>
        <taxon>Taphrinomycotina</taxon>
        <taxon>Schizosaccharomycetes</taxon>
        <taxon>Schizosaccharomycetales</taxon>
        <taxon>Schizosaccharomycetaceae</taxon>
        <taxon>Schizosaccharomyces</taxon>
    </lineage>
</organism>
<sequence length="320" mass="35109">MINSKSKKKESNALVLKSLLREPYNKVCADCKRNEQPRWASWNLGVFICIRCSGVHRSLGVHVSRVKSVDLDSWTDEQTENMTRWGNERANLYWEAKLAGGHVPSDSKIATFIKTKYEFKKWVLYPEIPSPETLKPEQNTRPVSEVNASLDLNTASRSSSAHSVKSTSSATVTNVTSKKEAISATTSLAQSSPNLASLSKQPSTVHAPSTRQRDLKSSILSLYASPRPQVSSSSITTNATYQNLPSPVSTSTTSSQPYGAFHQPATTGSSFVADKWKMPMFTSNVTSAQPSARASPVQSNSSRPRSSLDSKIINSHDVWK</sequence>
<name>YIQ9_SCHPO</name>
<accession>Q9UT34</accession>
<evidence type="ECO:0000255" key="1">
    <source>
        <dbReference type="PROSITE-ProRule" id="PRU00288"/>
    </source>
</evidence>
<evidence type="ECO:0000256" key="2">
    <source>
        <dbReference type="SAM" id="MobiDB-lite"/>
    </source>
</evidence>
<evidence type="ECO:0000269" key="3">
    <source>
    </source>
</evidence>
<evidence type="ECO:0000305" key="4"/>
<reference key="1">
    <citation type="journal article" date="2002" name="Nature">
        <title>The genome sequence of Schizosaccharomyces pombe.</title>
        <authorList>
            <person name="Wood V."/>
            <person name="Gwilliam R."/>
            <person name="Rajandream M.A."/>
            <person name="Lyne M.H."/>
            <person name="Lyne R."/>
            <person name="Stewart A."/>
            <person name="Sgouros J.G."/>
            <person name="Peat N."/>
            <person name="Hayles J."/>
            <person name="Baker S.G."/>
            <person name="Basham D."/>
            <person name="Bowman S."/>
            <person name="Brooks K."/>
            <person name="Brown D."/>
            <person name="Brown S."/>
            <person name="Chillingworth T."/>
            <person name="Churcher C.M."/>
            <person name="Collins M."/>
            <person name="Connor R."/>
            <person name="Cronin A."/>
            <person name="Davis P."/>
            <person name="Feltwell T."/>
            <person name="Fraser A."/>
            <person name="Gentles S."/>
            <person name="Goble A."/>
            <person name="Hamlin N."/>
            <person name="Harris D.E."/>
            <person name="Hidalgo J."/>
            <person name="Hodgson G."/>
            <person name="Holroyd S."/>
            <person name="Hornsby T."/>
            <person name="Howarth S."/>
            <person name="Huckle E.J."/>
            <person name="Hunt S."/>
            <person name="Jagels K."/>
            <person name="James K.D."/>
            <person name="Jones L."/>
            <person name="Jones M."/>
            <person name="Leather S."/>
            <person name="McDonald S."/>
            <person name="McLean J."/>
            <person name="Mooney P."/>
            <person name="Moule S."/>
            <person name="Mungall K.L."/>
            <person name="Murphy L.D."/>
            <person name="Niblett D."/>
            <person name="Odell C."/>
            <person name="Oliver K."/>
            <person name="O'Neil S."/>
            <person name="Pearson D."/>
            <person name="Quail M.A."/>
            <person name="Rabbinowitsch E."/>
            <person name="Rutherford K.M."/>
            <person name="Rutter S."/>
            <person name="Saunders D."/>
            <person name="Seeger K."/>
            <person name="Sharp S."/>
            <person name="Skelton J."/>
            <person name="Simmonds M.N."/>
            <person name="Squares R."/>
            <person name="Squares S."/>
            <person name="Stevens K."/>
            <person name="Taylor K."/>
            <person name="Taylor R.G."/>
            <person name="Tivey A."/>
            <person name="Walsh S.V."/>
            <person name="Warren T."/>
            <person name="Whitehead S."/>
            <person name="Woodward J.R."/>
            <person name="Volckaert G."/>
            <person name="Aert R."/>
            <person name="Robben J."/>
            <person name="Grymonprez B."/>
            <person name="Weltjens I."/>
            <person name="Vanstreels E."/>
            <person name="Rieger M."/>
            <person name="Schaefer M."/>
            <person name="Mueller-Auer S."/>
            <person name="Gabel C."/>
            <person name="Fuchs M."/>
            <person name="Duesterhoeft A."/>
            <person name="Fritzc C."/>
            <person name="Holzer E."/>
            <person name="Moestl D."/>
            <person name="Hilbert H."/>
            <person name="Borzym K."/>
            <person name="Langer I."/>
            <person name="Beck A."/>
            <person name="Lehrach H."/>
            <person name="Reinhardt R."/>
            <person name="Pohl T.M."/>
            <person name="Eger P."/>
            <person name="Zimmermann W."/>
            <person name="Wedler H."/>
            <person name="Wambutt R."/>
            <person name="Purnelle B."/>
            <person name="Goffeau A."/>
            <person name="Cadieu E."/>
            <person name="Dreano S."/>
            <person name="Gloux S."/>
            <person name="Lelaure V."/>
            <person name="Mottier S."/>
            <person name="Galibert F."/>
            <person name="Aves S.J."/>
            <person name="Xiang Z."/>
            <person name="Hunt C."/>
            <person name="Moore K."/>
            <person name="Hurst S.M."/>
            <person name="Lucas M."/>
            <person name="Rochet M."/>
            <person name="Gaillardin C."/>
            <person name="Tallada V.A."/>
            <person name="Garzon A."/>
            <person name="Thode G."/>
            <person name="Daga R.R."/>
            <person name="Cruzado L."/>
            <person name="Jimenez J."/>
            <person name="Sanchez M."/>
            <person name="del Rey F."/>
            <person name="Benito J."/>
            <person name="Dominguez A."/>
            <person name="Revuelta J.L."/>
            <person name="Moreno S."/>
            <person name="Armstrong J."/>
            <person name="Forsburg S.L."/>
            <person name="Cerutti L."/>
            <person name="Lowe T."/>
            <person name="McCombie W.R."/>
            <person name="Paulsen I."/>
            <person name="Potashkin J."/>
            <person name="Shpakovski G.V."/>
            <person name="Ussery D."/>
            <person name="Barrell B.G."/>
            <person name="Nurse P."/>
        </authorList>
    </citation>
    <scope>NUCLEOTIDE SEQUENCE [LARGE SCALE GENOMIC DNA]</scope>
    <source>
        <strain>972 / ATCC 24843</strain>
    </source>
</reference>
<reference key="2">
    <citation type="journal article" date="2006" name="Nat. Biotechnol.">
        <title>ORFeome cloning and global analysis of protein localization in the fission yeast Schizosaccharomyces pombe.</title>
        <authorList>
            <person name="Matsuyama A."/>
            <person name="Arai R."/>
            <person name="Yashiroda Y."/>
            <person name="Shirai A."/>
            <person name="Kamata A."/>
            <person name="Sekido S."/>
            <person name="Kobayashi Y."/>
            <person name="Hashimoto A."/>
            <person name="Hamamoto M."/>
            <person name="Hiraoka Y."/>
            <person name="Horinouchi S."/>
            <person name="Yoshida M."/>
        </authorList>
    </citation>
    <scope>SUBCELLULAR LOCATION [LARGE SCALE ANALYSIS]</scope>
</reference>
<comment type="function">
    <text evidence="4">GTPase-activating protein for the ADP ribosylation factor family.</text>
</comment>
<comment type="subcellular location">
    <subcellularLocation>
        <location evidence="3">Cytoplasm</location>
    </subcellularLocation>
    <subcellularLocation>
        <location evidence="3">Golgi apparatus</location>
    </subcellularLocation>
</comment>
<feature type="chain" id="PRO_0000318103" description="Uncharacterized protein C824.09c">
    <location>
        <begin position="1"/>
        <end position="320"/>
    </location>
</feature>
<feature type="domain" description="Arf-GAP" evidence="1">
    <location>
        <begin position="13"/>
        <end position="132"/>
    </location>
</feature>
<feature type="zinc finger region" description="C4-type" evidence="1">
    <location>
        <begin position="28"/>
        <end position="52"/>
    </location>
</feature>
<feature type="region of interest" description="Disordered" evidence="2">
    <location>
        <begin position="153"/>
        <end position="212"/>
    </location>
</feature>
<feature type="region of interest" description="Disordered" evidence="2">
    <location>
        <begin position="227"/>
        <end position="261"/>
    </location>
</feature>
<feature type="region of interest" description="Disordered" evidence="2">
    <location>
        <begin position="284"/>
        <end position="320"/>
    </location>
</feature>
<feature type="compositionally biased region" description="Low complexity" evidence="2">
    <location>
        <begin position="154"/>
        <end position="176"/>
    </location>
</feature>
<feature type="compositionally biased region" description="Polar residues" evidence="2">
    <location>
        <begin position="183"/>
        <end position="210"/>
    </location>
</feature>
<feature type="compositionally biased region" description="Polar residues" evidence="2">
    <location>
        <begin position="228"/>
        <end position="244"/>
    </location>
</feature>
<feature type="compositionally biased region" description="Low complexity" evidence="2">
    <location>
        <begin position="245"/>
        <end position="257"/>
    </location>
</feature>
<feature type="compositionally biased region" description="Low complexity" evidence="2">
    <location>
        <begin position="295"/>
        <end position="310"/>
    </location>
</feature>
<gene>
    <name type="ORF">SPAC824.09c</name>
</gene>
<proteinExistence type="predicted"/>
<dbReference type="EMBL" id="CU329670">
    <property type="protein sequence ID" value="CAB57339.1"/>
    <property type="molecule type" value="Genomic_DNA"/>
</dbReference>
<dbReference type="PIR" id="T39110">
    <property type="entry name" value="T39110"/>
</dbReference>
<dbReference type="RefSeq" id="NP_593448.1">
    <property type="nucleotide sequence ID" value="NM_001018881.2"/>
</dbReference>
<dbReference type="SMR" id="Q9UT34"/>
<dbReference type="BioGRID" id="279124">
    <property type="interactions" value="31"/>
</dbReference>
<dbReference type="FunCoup" id="Q9UT34">
    <property type="interactions" value="482"/>
</dbReference>
<dbReference type="STRING" id="284812.Q9UT34"/>
<dbReference type="iPTMnet" id="Q9UT34"/>
<dbReference type="PaxDb" id="4896-SPAC824.09c.1"/>
<dbReference type="EnsemblFungi" id="SPAC824.09c.1">
    <property type="protein sequence ID" value="SPAC824.09c.1:pep"/>
    <property type="gene ID" value="SPAC824.09c"/>
</dbReference>
<dbReference type="KEGG" id="spo:2542671"/>
<dbReference type="PomBase" id="SPAC824.09c"/>
<dbReference type="VEuPathDB" id="FungiDB:SPAC824.09c"/>
<dbReference type="eggNOG" id="KOG0703">
    <property type="taxonomic scope" value="Eukaryota"/>
</dbReference>
<dbReference type="HOGENOM" id="CLU_023062_3_1_1"/>
<dbReference type="InParanoid" id="Q9UT34"/>
<dbReference type="OMA" id="YEYKKWI"/>
<dbReference type="PhylomeDB" id="Q9UT34"/>
<dbReference type="PRO" id="PR:Q9UT34"/>
<dbReference type="Proteomes" id="UP000002485">
    <property type="component" value="Chromosome I"/>
</dbReference>
<dbReference type="GO" id="GO:0030136">
    <property type="term" value="C:clathrin-coated vesicle"/>
    <property type="evidence" value="ECO:0000266"/>
    <property type="project" value="PomBase"/>
</dbReference>
<dbReference type="GO" id="GO:0005737">
    <property type="term" value="C:cytoplasm"/>
    <property type="evidence" value="ECO:0007005"/>
    <property type="project" value="PomBase"/>
</dbReference>
<dbReference type="GO" id="GO:0005794">
    <property type="term" value="C:Golgi apparatus"/>
    <property type="evidence" value="ECO:0007005"/>
    <property type="project" value="PomBase"/>
</dbReference>
<dbReference type="GO" id="GO:0005096">
    <property type="term" value="F:GTPase activator activity"/>
    <property type="evidence" value="ECO:0000318"/>
    <property type="project" value="GO_Central"/>
</dbReference>
<dbReference type="GO" id="GO:0008270">
    <property type="term" value="F:zinc ion binding"/>
    <property type="evidence" value="ECO:0007669"/>
    <property type="project" value="UniProtKB-KW"/>
</dbReference>
<dbReference type="GO" id="GO:0006888">
    <property type="term" value="P:endoplasmic reticulum to Golgi vesicle-mediated transport"/>
    <property type="evidence" value="ECO:0000266"/>
    <property type="project" value="PomBase"/>
</dbReference>
<dbReference type="GO" id="GO:0006891">
    <property type="term" value="P:intra-Golgi vesicle-mediated transport"/>
    <property type="evidence" value="ECO:0000266"/>
    <property type="project" value="PomBase"/>
</dbReference>
<dbReference type="CDD" id="cd08839">
    <property type="entry name" value="ArfGap_SMAP"/>
    <property type="match status" value="1"/>
</dbReference>
<dbReference type="FunFam" id="1.10.220.150:FF:000009">
    <property type="entry name" value="stromal membrane-associated protein 1 isoform X1"/>
    <property type="match status" value="1"/>
</dbReference>
<dbReference type="Gene3D" id="1.10.220.150">
    <property type="entry name" value="Arf GTPase activating protein"/>
    <property type="match status" value="1"/>
</dbReference>
<dbReference type="InterPro" id="IPR051718">
    <property type="entry name" value="ARF_GTPase-activating"/>
</dbReference>
<dbReference type="InterPro" id="IPR037278">
    <property type="entry name" value="ARFGAP/RecO"/>
</dbReference>
<dbReference type="InterPro" id="IPR001164">
    <property type="entry name" value="ArfGAP_dom"/>
</dbReference>
<dbReference type="InterPro" id="IPR038508">
    <property type="entry name" value="ArfGAP_dom_sf"/>
</dbReference>
<dbReference type="InterPro" id="IPR044732">
    <property type="entry name" value="ArfGAP_SMAP1-like"/>
</dbReference>
<dbReference type="PANTHER" id="PTHR45705">
    <property type="entry name" value="FI20236P1"/>
    <property type="match status" value="1"/>
</dbReference>
<dbReference type="PANTHER" id="PTHR45705:SF1">
    <property type="entry name" value="FI20236P1"/>
    <property type="match status" value="1"/>
</dbReference>
<dbReference type="Pfam" id="PF01412">
    <property type="entry name" value="ArfGap"/>
    <property type="match status" value="1"/>
</dbReference>
<dbReference type="PRINTS" id="PR00405">
    <property type="entry name" value="REVINTRACTNG"/>
</dbReference>
<dbReference type="SMART" id="SM00105">
    <property type="entry name" value="ArfGap"/>
    <property type="match status" value="1"/>
</dbReference>
<dbReference type="SUPFAM" id="SSF57863">
    <property type="entry name" value="ArfGap/RecO-like zinc finger"/>
    <property type="match status" value="1"/>
</dbReference>
<dbReference type="PROSITE" id="PS50115">
    <property type="entry name" value="ARFGAP"/>
    <property type="match status" value="1"/>
</dbReference>